<reference key="1">
    <citation type="journal article" date="2003" name="Nat. Genet.">
        <title>Comparative analysis of the genome sequences of Bordetella pertussis, Bordetella parapertussis and Bordetella bronchiseptica.</title>
        <authorList>
            <person name="Parkhill J."/>
            <person name="Sebaihia M."/>
            <person name="Preston A."/>
            <person name="Murphy L.D."/>
            <person name="Thomson N.R."/>
            <person name="Harris D.E."/>
            <person name="Holden M.T.G."/>
            <person name="Churcher C.M."/>
            <person name="Bentley S.D."/>
            <person name="Mungall K.L."/>
            <person name="Cerdeno-Tarraga A.-M."/>
            <person name="Temple L."/>
            <person name="James K.D."/>
            <person name="Harris B."/>
            <person name="Quail M.A."/>
            <person name="Achtman M."/>
            <person name="Atkin R."/>
            <person name="Baker S."/>
            <person name="Basham D."/>
            <person name="Bason N."/>
            <person name="Cherevach I."/>
            <person name="Chillingworth T."/>
            <person name="Collins M."/>
            <person name="Cronin A."/>
            <person name="Davis P."/>
            <person name="Doggett J."/>
            <person name="Feltwell T."/>
            <person name="Goble A."/>
            <person name="Hamlin N."/>
            <person name="Hauser H."/>
            <person name="Holroyd S."/>
            <person name="Jagels K."/>
            <person name="Leather S."/>
            <person name="Moule S."/>
            <person name="Norberczak H."/>
            <person name="O'Neil S."/>
            <person name="Ormond D."/>
            <person name="Price C."/>
            <person name="Rabbinowitsch E."/>
            <person name="Rutter S."/>
            <person name="Sanders M."/>
            <person name="Saunders D."/>
            <person name="Seeger K."/>
            <person name="Sharp S."/>
            <person name="Simmonds M."/>
            <person name="Skelton J."/>
            <person name="Squares R."/>
            <person name="Squares S."/>
            <person name="Stevens K."/>
            <person name="Unwin L."/>
            <person name="Whitehead S."/>
            <person name="Barrell B.G."/>
            <person name="Maskell D.J."/>
        </authorList>
    </citation>
    <scope>NUCLEOTIDE SEQUENCE [LARGE SCALE GENOMIC DNA]</scope>
    <source>
        <strain>ATCC BAA-588 / NCTC 13252 / RB50</strain>
    </source>
</reference>
<name>PLSX_BORBR</name>
<dbReference type="EC" id="2.3.1.274" evidence="1"/>
<dbReference type="EMBL" id="BX640448">
    <property type="protein sequence ID" value="CAE35733.1"/>
    <property type="molecule type" value="Genomic_DNA"/>
</dbReference>
<dbReference type="RefSeq" id="WP_003813826.1">
    <property type="nucleotide sequence ID" value="NC_002927.3"/>
</dbReference>
<dbReference type="SMR" id="Q7WD19"/>
<dbReference type="GeneID" id="93205090"/>
<dbReference type="KEGG" id="bbr:BB3759"/>
<dbReference type="eggNOG" id="COG0416">
    <property type="taxonomic scope" value="Bacteria"/>
</dbReference>
<dbReference type="HOGENOM" id="CLU_039379_1_0_4"/>
<dbReference type="UniPathway" id="UPA00085"/>
<dbReference type="Proteomes" id="UP000001027">
    <property type="component" value="Chromosome"/>
</dbReference>
<dbReference type="GO" id="GO:0005737">
    <property type="term" value="C:cytoplasm"/>
    <property type="evidence" value="ECO:0007669"/>
    <property type="project" value="UniProtKB-SubCell"/>
</dbReference>
<dbReference type="GO" id="GO:0043811">
    <property type="term" value="F:phosphate:acyl-[acyl carrier protein] acyltransferase activity"/>
    <property type="evidence" value="ECO:0007669"/>
    <property type="project" value="UniProtKB-UniRule"/>
</dbReference>
<dbReference type="GO" id="GO:0006633">
    <property type="term" value="P:fatty acid biosynthetic process"/>
    <property type="evidence" value="ECO:0007669"/>
    <property type="project" value="UniProtKB-UniRule"/>
</dbReference>
<dbReference type="GO" id="GO:0008654">
    <property type="term" value="P:phospholipid biosynthetic process"/>
    <property type="evidence" value="ECO:0007669"/>
    <property type="project" value="UniProtKB-KW"/>
</dbReference>
<dbReference type="Gene3D" id="3.40.718.10">
    <property type="entry name" value="Isopropylmalate Dehydrogenase"/>
    <property type="match status" value="1"/>
</dbReference>
<dbReference type="HAMAP" id="MF_00019">
    <property type="entry name" value="PlsX"/>
    <property type="match status" value="1"/>
</dbReference>
<dbReference type="InterPro" id="IPR003664">
    <property type="entry name" value="FA_synthesis"/>
</dbReference>
<dbReference type="InterPro" id="IPR012281">
    <property type="entry name" value="Phospholipid_synth_PlsX-like"/>
</dbReference>
<dbReference type="NCBIfam" id="TIGR00182">
    <property type="entry name" value="plsX"/>
    <property type="match status" value="1"/>
</dbReference>
<dbReference type="PANTHER" id="PTHR30100">
    <property type="entry name" value="FATTY ACID/PHOSPHOLIPID SYNTHESIS PROTEIN PLSX"/>
    <property type="match status" value="1"/>
</dbReference>
<dbReference type="PANTHER" id="PTHR30100:SF1">
    <property type="entry name" value="PHOSPHATE ACYLTRANSFERASE"/>
    <property type="match status" value="1"/>
</dbReference>
<dbReference type="Pfam" id="PF02504">
    <property type="entry name" value="FA_synthesis"/>
    <property type="match status" value="1"/>
</dbReference>
<dbReference type="PIRSF" id="PIRSF002465">
    <property type="entry name" value="Phsphlp_syn_PlsX"/>
    <property type="match status" value="1"/>
</dbReference>
<dbReference type="SUPFAM" id="SSF53659">
    <property type="entry name" value="Isocitrate/Isopropylmalate dehydrogenase-like"/>
    <property type="match status" value="1"/>
</dbReference>
<organism>
    <name type="scientific">Bordetella bronchiseptica (strain ATCC BAA-588 / NCTC 13252 / RB50)</name>
    <name type="common">Alcaligenes bronchisepticus</name>
    <dbReference type="NCBI Taxonomy" id="257310"/>
    <lineage>
        <taxon>Bacteria</taxon>
        <taxon>Pseudomonadati</taxon>
        <taxon>Pseudomonadota</taxon>
        <taxon>Betaproteobacteria</taxon>
        <taxon>Burkholderiales</taxon>
        <taxon>Alcaligenaceae</taxon>
        <taxon>Bordetella</taxon>
    </lineage>
</organism>
<sequence length="352" mass="37574">MIRIAIDCMGGDFGLPVTIPAAIEFARQFPDTRLLLVGLPDAIEAALAERRDAPRDRLDIVPATEVVSMDDPVEVALRRKKDSSMRLAAQAVKDGRADACISAGNTGAWMAISRYVLKTLDGIDRPAIATSIPNQTGRATTVLDLGANVDCSAEHLLQFAIMGAALSQAVDHRDRPTVGLLNIGEEIIKGNEVVKEAAELLRASPLNFYGNVEGNDIFKGTVDVVVCDGFVGNVVLKSVEGLAKMLSSVIREEFKRNFITLLAGAFAKPVLNRLRNRVDNRRYNGAALLGLRGVVIKSHGSADAYAFGFALQRAREAVASKLLERTAQTVAQITQRVQSGEAVAPGAAGDTA</sequence>
<keyword id="KW-0963">Cytoplasm</keyword>
<keyword id="KW-0444">Lipid biosynthesis</keyword>
<keyword id="KW-0443">Lipid metabolism</keyword>
<keyword id="KW-0594">Phospholipid biosynthesis</keyword>
<keyword id="KW-1208">Phospholipid metabolism</keyword>
<keyword id="KW-0808">Transferase</keyword>
<evidence type="ECO:0000255" key="1">
    <source>
        <dbReference type="HAMAP-Rule" id="MF_00019"/>
    </source>
</evidence>
<protein>
    <recommendedName>
        <fullName evidence="1">Phosphate acyltransferase</fullName>
        <ecNumber evidence="1">2.3.1.274</ecNumber>
    </recommendedName>
    <alternativeName>
        <fullName evidence="1">Acyl-ACP phosphotransacylase</fullName>
    </alternativeName>
    <alternativeName>
        <fullName evidence="1">Acyl-[acyl-carrier-protein]--phosphate acyltransferase</fullName>
    </alternativeName>
    <alternativeName>
        <fullName evidence="1">Phosphate-acyl-ACP acyltransferase</fullName>
    </alternativeName>
</protein>
<comment type="function">
    <text evidence="1">Catalyzes the reversible formation of acyl-phosphate (acyl-PO(4)) from acyl-[acyl-carrier-protein] (acyl-ACP). This enzyme utilizes acyl-ACP as fatty acyl donor, but not acyl-CoA.</text>
</comment>
<comment type="catalytic activity">
    <reaction evidence="1">
        <text>a fatty acyl-[ACP] + phosphate = an acyl phosphate + holo-[ACP]</text>
        <dbReference type="Rhea" id="RHEA:42292"/>
        <dbReference type="Rhea" id="RHEA-COMP:9685"/>
        <dbReference type="Rhea" id="RHEA-COMP:14125"/>
        <dbReference type="ChEBI" id="CHEBI:43474"/>
        <dbReference type="ChEBI" id="CHEBI:59918"/>
        <dbReference type="ChEBI" id="CHEBI:64479"/>
        <dbReference type="ChEBI" id="CHEBI:138651"/>
        <dbReference type="EC" id="2.3.1.274"/>
    </reaction>
</comment>
<comment type="pathway">
    <text evidence="1">Lipid metabolism; phospholipid metabolism.</text>
</comment>
<comment type="subunit">
    <text evidence="1">Homodimer. Probably interacts with PlsY.</text>
</comment>
<comment type="subcellular location">
    <subcellularLocation>
        <location evidence="1">Cytoplasm</location>
    </subcellularLocation>
    <text evidence="1">Associated with the membrane possibly through PlsY.</text>
</comment>
<comment type="similarity">
    <text evidence="1">Belongs to the PlsX family.</text>
</comment>
<feature type="chain" id="PRO_0000189850" description="Phosphate acyltransferase">
    <location>
        <begin position="1"/>
        <end position="352"/>
    </location>
</feature>
<proteinExistence type="inferred from homology"/>
<gene>
    <name evidence="1" type="primary">plsX</name>
    <name type="ordered locus">BB3759</name>
</gene>
<accession>Q7WD19</accession>